<proteinExistence type="inferred from homology"/>
<name>SSRP_XANOR</name>
<feature type="chain" id="PRO_0000103073" description="SsrA-binding protein">
    <location>
        <begin position="1"/>
        <end position="167"/>
    </location>
</feature>
<feature type="region of interest" description="Disordered" evidence="2">
    <location>
        <begin position="139"/>
        <end position="167"/>
    </location>
</feature>
<feature type="compositionally biased region" description="Basic and acidic residues" evidence="2">
    <location>
        <begin position="139"/>
        <end position="158"/>
    </location>
</feature>
<evidence type="ECO:0000255" key="1">
    <source>
        <dbReference type="HAMAP-Rule" id="MF_00023"/>
    </source>
</evidence>
<evidence type="ECO:0000256" key="2">
    <source>
        <dbReference type="SAM" id="MobiDB-lite"/>
    </source>
</evidence>
<dbReference type="EMBL" id="AE013598">
    <property type="protein sequence ID" value="AAW75277.1"/>
    <property type="molecule type" value="Genomic_DNA"/>
</dbReference>
<dbReference type="SMR" id="Q5H194"/>
<dbReference type="STRING" id="291331.XOO2023"/>
<dbReference type="KEGG" id="xoo:XOO2023"/>
<dbReference type="HOGENOM" id="CLU_108953_3_0_6"/>
<dbReference type="Proteomes" id="UP000006735">
    <property type="component" value="Chromosome"/>
</dbReference>
<dbReference type="GO" id="GO:0005829">
    <property type="term" value="C:cytosol"/>
    <property type="evidence" value="ECO:0007669"/>
    <property type="project" value="TreeGrafter"/>
</dbReference>
<dbReference type="GO" id="GO:0003723">
    <property type="term" value="F:RNA binding"/>
    <property type="evidence" value="ECO:0007669"/>
    <property type="project" value="UniProtKB-UniRule"/>
</dbReference>
<dbReference type="GO" id="GO:0070929">
    <property type="term" value="P:trans-translation"/>
    <property type="evidence" value="ECO:0007669"/>
    <property type="project" value="UniProtKB-UniRule"/>
</dbReference>
<dbReference type="CDD" id="cd09294">
    <property type="entry name" value="SmpB"/>
    <property type="match status" value="1"/>
</dbReference>
<dbReference type="Gene3D" id="2.40.280.10">
    <property type="match status" value="1"/>
</dbReference>
<dbReference type="HAMAP" id="MF_00023">
    <property type="entry name" value="SmpB"/>
    <property type="match status" value="1"/>
</dbReference>
<dbReference type="InterPro" id="IPR023620">
    <property type="entry name" value="SmpB"/>
</dbReference>
<dbReference type="InterPro" id="IPR000037">
    <property type="entry name" value="SsrA-bd_prot"/>
</dbReference>
<dbReference type="InterPro" id="IPR020081">
    <property type="entry name" value="SsrA-bd_prot_CS"/>
</dbReference>
<dbReference type="NCBIfam" id="NF003843">
    <property type="entry name" value="PRK05422.1"/>
    <property type="match status" value="1"/>
</dbReference>
<dbReference type="NCBIfam" id="TIGR00086">
    <property type="entry name" value="smpB"/>
    <property type="match status" value="1"/>
</dbReference>
<dbReference type="PANTHER" id="PTHR30308:SF2">
    <property type="entry name" value="SSRA-BINDING PROTEIN"/>
    <property type="match status" value="1"/>
</dbReference>
<dbReference type="PANTHER" id="PTHR30308">
    <property type="entry name" value="TMRNA-BINDING COMPONENT OF TRANS-TRANSLATION TAGGING COMPLEX"/>
    <property type="match status" value="1"/>
</dbReference>
<dbReference type="Pfam" id="PF01668">
    <property type="entry name" value="SmpB"/>
    <property type="match status" value="1"/>
</dbReference>
<dbReference type="SUPFAM" id="SSF74982">
    <property type="entry name" value="Small protein B (SmpB)"/>
    <property type="match status" value="1"/>
</dbReference>
<dbReference type="PROSITE" id="PS01317">
    <property type="entry name" value="SSRP"/>
    <property type="match status" value="1"/>
</dbReference>
<organism>
    <name type="scientific">Xanthomonas oryzae pv. oryzae (strain KACC10331 / KXO85)</name>
    <dbReference type="NCBI Taxonomy" id="291331"/>
    <lineage>
        <taxon>Bacteria</taxon>
        <taxon>Pseudomonadati</taxon>
        <taxon>Pseudomonadota</taxon>
        <taxon>Gammaproteobacteria</taxon>
        <taxon>Lysobacterales</taxon>
        <taxon>Lysobacteraceae</taxon>
        <taxon>Xanthomonas</taxon>
    </lineage>
</organism>
<sequence length="167" mass="19266">MSKKPTKDKANGAKATKTIALNKRARHEYHLEERYEAGLALQGWEIKAIRAGRANIVDGYAYVRSGEIYLIGAQITPLIQASTHTVPVERRDRKLLLHRAEIDKVLTRVEREGYTLVPTALYWSSNKVKLEIALAKGKQNHDKRDAAKERDWQRDKQRVMRRHNRDA</sequence>
<protein>
    <recommendedName>
        <fullName evidence="1">SsrA-binding protein</fullName>
    </recommendedName>
    <alternativeName>
        <fullName evidence="1">Small protein B</fullName>
    </alternativeName>
</protein>
<accession>Q5H194</accession>
<keyword id="KW-0963">Cytoplasm</keyword>
<keyword id="KW-1185">Reference proteome</keyword>
<keyword id="KW-0694">RNA-binding</keyword>
<reference key="1">
    <citation type="journal article" date="2005" name="Nucleic Acids Res.">
        <title>The genome sequence of Xanthomonas oryzae pathovar oryzae KACC10331, the bacterial blight pathogen of rice.</title>
        <authorList>
            <person name="Lee B.-M."/>
            <person name="Park Y.-J."/>
            <person name="Park D.-S."/>
            <person name="Kang H.-W."/>
            <person name="Kim J.-G."/>
            <person name="Song E.-S."/>
            <person name="Park I.-C."/>
            <person name="Yoon U.-H."/>
            <person name="Hahn J.-H."/>
            <person name="Koo B.-S."/>
            <person name="Lee G.-B."/>
            <person name="Kim H."/>
            <person name="Park H.-S."/>
            <person name="Yoon K.-O."/>
            <person name="Kim J.-H."/>
            <person name="Jung C.-H."/>
            <person name="Koh N.-H."/>
            <person name="Seo J.-S."/>
            <person name="Go S.-J."/>
        </authorList>
    </citation>
    <scope>NUCLEOTIDE SEQUENCE [LARGE SCALE GENOMIC DNA]</scope>
    <source>
        <strain>KACC10331 / KXO85</strain>
    </source>
</reference>
<comment type="function">
    <text evidence="1">Required for rescue of stalled ribosomes mediated by trans-translation. Binds to transfer-messenger RNA (tmRNA), required for stable association of tmRNA with ribosomes. tmRNA and SmpB together mimic tRNA shape, replacing the anticodon stem-loop with SmpB. tmRNA is encoded by the ssrA gene; the 2 termini fold to resemble tRNA(Ala) and it encodes a 'tag peptide', a short internal open reading frame. During trans-translation Ala-aminoacylated tmRNA acts like a tRNA, entering the A-site of stalled ribosomes, displacing the stalled mRNA. The ribosome then switches to translate the ORF on the tmRNA; the nascent peptide is terminated with the 'tag peptide' encoded by the tmRNA and targeted for degradation. The ribosome is freed to recommence translation, which seems to be the essential function of trans-translation.</text>
</comment>
<comment type="subcellular location">
    <subcellularLocation>
        <location evidence="1">Cytoplasm</location>
    </subcellularLocation>
    <text evidence="1">The tmRNA-SmpB complex associates with stalled 70S ribosomes.</text>
</comment>
<comment type="similarity">
    <text evidence="1">Belongs to the SmpB family.</text>
</comment>
<gene>
    <name evidence="1" type="primary">smpB</name>
    <name type="ordered locus">XOO2023</name>
</gene>